<reference key="1">
    <citation type="journal article" date="2000" name="Genome Res.">
        <title>Cloning and functional analysis of cDNAs with open reading frames for 300 previously undefined genes expressed in CD34+ hematopoietic stem/progenitor cells.</title>
        <authorList>
            <person name="Zhang Q.-H."/>
            <person name="Ye M."/>
            <person name="Wu X.-Y."/>
            <person name="Ren S.-X."/>
            <person name="Zhao M."/>
            <person name="Zhao C.-J."/>
            <person name="Fu G."/>
            <person name="Shen Y."/>
            <person name="Fan H.-Y."/>
            <person name="Lu G."/>
            <person name="Zhong M."/>
            <person name="Xu X.-R."/>
            <person name="Han Z.-G."/>
            <person name="Zhang J.-W."/>
            <person name="Tao J."/>
            <person name="Huang Q.-H."/>
            <person name="Zhou J."/>
            <person name="Hu G.-X."/>
            <person name="Gu J."/>
            <person name="Chen S.-J."/>
            <person name="Chen Z."/>
        </authorList>
    </citation>
    <scope>NUCLEOTIDE SEQUENCE [LARGE SCALE MRNA] (ISOFORM 1)</scope>
    <source>
        <tissue>Bone marrow</tissue>
    </source>
</reference>
<reference key="2">
    <citation type="journal article" date="2004" name="Nat. Genet.">
        <title>Complete sequencing and characterization of 21,243 full-length human cDNAs.</title>
        <authorList>
            <person name="Ota T."/>
            <person name="Suzuki Y."/>
            <person name="Nishikawa T."/>
            <person name="Otsuki T."/>
            <person name="Sugiyama T."/>
            <person name="Irie R."/>
            <person name="Wakamatsu A."/>
            <person name="Hayashi K."/>
            <person name="Sato H."/>
            <person name="Nagai K."/>
            <person name="Kimura K."/>
            <person name="Makita H."/>
            <person name="Sekine M."/>
            <person name="Obayashi M."/>
            <person name="Nishi T."/>
            <person name="Shibahara T."/>
            <person name="Tanaka T."/>
            <person name="Ishii S."/>
            <person name="Yamamoto J."/>
            <person name="Saito K."/>
            <person name="Kawai Y."/>
            <person name="Isono Y."/>
            <person name="Nakamura Y."/>
            <person name="Nagahari K."/>
            <person name="Murakami K."/>
            <person name="Yasuda T."/>
            <person name="Iwayanagi T."/>
            <person name="Wagatsuma M."/>
            <person name="Shiratori A."/>
            <person name="Sudo H."/>
            <person name="Hosoiri T."/>
            <person name="Kaku Y."/>
            <person name="Kodaira H."/>
            <person name="Kondo H."/>
            <person name="Sugawara M."/>
            <person name="Takahashi M."/>
            <person name="Kanda K."/>
            <person name="Yokoi T."/>
            <person name="Furuya T."/>
            <person name="Kikkawa E."/>
            <person name="Omura Y."/>
            <person name="Abe K."/>
            <person name="Kamihara K."/>
            <person name="Katsuta N."/>
            <person name="Sato K."/>
            <person name="Tanikawa M."/>
            <person name="Yamazaki M."/>
            <person name="Ninomiya K."/>
            <person name="Ishibashi T."/>
            <person name="Yamashita H."/>
            <person name="Murakawa K."/>
            <person name="Fujimori K."/>
            <person name="Tanai H."/>
            <person name="Kimata M."/>
            <person name="Watanabe M."/>
            <person name="Hiraoka S."/>
            <person name="Chiba Y."/>
            <person name="Ishida S."/>
            <person name="Ono Y."/>
            <person name="Takiguchi S."/>
            <person name="Watanabe S."/>
            <person name="Yosida M."/>
            <person name="Hotuta T."/>
            <person name="Kusano J."/>
            <person name="Kanehori K."/>
            <person name="Takahashi-Fujii A."/>
            <person name="Hara H."/>
            <person name="Tanase T.-O."/>
            <person name="Nomura Y."/>
            <person name="Togiya S."/>
            <person name="Komai F."/>
            <person name="Hara R."/>
            <person name="Takeuchi K."/>
            <person name="Arita M."/>
            <person name="Imose N."/>
            <person name="Musashino K."/>
            <person name="Yuuki H."/>
            <person name="Oshima A."/>
            <person name="Sasaki N."/>
            <person name="Aotsuka S."/>
            <person name="Yoshikawa Y."/>
            <person name="Matsunawa H."/>
            <person name="Ichihara T."/>
            <person name="Shiohata N."/>
            <person name="Sano S."/>
            <person name="Moriya S."/>
            <person name="Momiyama H."/>
            <person name="Satoh N."/>
            <person name="Takami S."/>
            <person name="Terashima Y."/>
            <person name="Suzuki O."/>
            <person name="Nakagawa S."/>
            <person name="Senoh A."/>
            <person name="Mizoguchi H."/>
            <person name="Goto Y."/>
            <person name="Shimizu F."/>
            <person name="Wakebe H."/>
            <person name="Hishigaki H."/>
            <person name="Watanabe T."/>
            <person name="Sugiyama A."/>
            <person name="Takemoto M."/>
            <person name="Kawakami B."/>
            <person name="Yamazaki M."/>
            <person name="Watanabe K."/>
            <person name="Kumagai A."/>
            <person name="Itakura S."/>
            <person name="Fukuzumi Y."/>
            <person name="Fujimori Y."/>
            <person name="Komiyama M."/>
            <person name="Tashiro H."/>
            <person name="Tanigami A."/>
            <person name="Fujiwara T."/>
            <person name="Ono T."/>
            <person name="Yamada K."/>
            <person name="Fujii Y."/>
            <person name="Ozaki K."/>
            <person name="Hirao M."/>
            <person name="Ohmori Y."/>
            <person name="Kawabata A."/>
            <person name="Hikiji T."/>
            <person name="Kobatake N."/>
            <person name="Inagaki H."/>
            <person name="Ikema Y."/>
            <person name="Okamoto S."/>
            <person name="Okitani R."/>
            <person name="Kawakami T."/>
            <person name="Noguchi S."/>
            <person name="Itoh T."/>
            <person name="Shigeta K."/>
            <person name="Senba T."/>
            <person name="Matsumura K."/>
            <person name="Nakajima Y."/>
            <person name="Mizuno T."/>
            <person name="Morinaga M."/>
            <person name="Sasaki M."/>
            <person name="Togashi T."/>
            <person name="Oyama M."/>
            <person name="Hata H."/>
            <person name="Watanabe M."/>
            <person name="Komatsu T."/>
            <person name="Mizushima-Sugano J."/>
            <person name="Satoh T."/>
            <person name="Shirai Y."/>
            <person name="Takahashi Y."/>
            <person name="Nakagawa K."/>
            <person name="Okumura K."/>
            <person name="Nagase T."/>
            <person name="Nomura N."/>
            <person name="Kikuchi H."/>
            <person name="Masuho Y."/>
            <person name="Yamashita R."/>
            <person name="Nakai K."/>
            <person name="Yada T."/>
            <person name="Nakamura Y."/>
            <person name="Ohara O."/>
            <person name="Isogai T."/>
            <person name="Sugano S."/>
        </authorList>
    </citation>
    <scope>NUCLEOTIDE SEQUENCE [LARGE SCALE MRNA] (ISOFORMS 1 AND 2)</scope>
</reference>
<reference key="3">
    <citation type="journal article" date="2007" name="BMC Genomics">
        <title>The full-ORF clone resource of the German cDNA consortium.</title>
        <authorList>
            <person name="Bechtel S."/>
            <person name="Rosenfelder H."/>
            <person name="Duda A."/>
            <person name="Schmidt C.P."/>
            <person name="Ernst U."/>
            <person name="Wellenreuther R."/>
            <person name="Mehrle A."/>
            <person name="Schuster C."/>
            <person name="Bahr A."/>
            <person name="Bloecker H."/>
            <person name="Heubner D."/>
            <person name="Hoerlein A."/>
            <person name="Michel G."/>
            <person name="Wedler H."/>
            <person name="Koehrer K."/>
            <person name="Ottenwaelder B."/>
            <person name="Poustka A."/>
            <person name="Wiemann S."/>
            <person name="Schupp I."/>
        </authorList>
    </citation>
    <scope>NUCLEOTIDE SEQUENCE [LARGE SCALE MRNA] (ISOFORM 1)</scope>
    <source>
        <tissue>Stomach</tissue>
    </source>
</reference>
<reference key="4">
    <citation type="journal article" date="2005" name="Nature">
        <title>Generation and annotation of the DNA sequences of human chromosomes 2 and 4.</title>
        <authorList>
            <person name="Hillier L.W."/>
            <person name="Graves T.A."/>
            <person name="Fulton R.S."/>
            <person name="Fulton L.A."/>
            <person name="Pepin K.H."/>
            <person name="Minx P."/>
            <person name="Wagner-McPherson C."/>
            <person name="Layman D."/>
            <person name="Wylie K."/>
            <person name="Sekhon M."/>
            <person name="Becker M.C."/>
            <person name="Fewell G.A."/>
            <person name="Delehaunty K.D."/>
            <person name="Miner T.L."/>
            <person name="Nash W.E."/>
            <person name="Kremitzki C."/>
            <person name="Oddy L."/>
            <person name="Du H."/>
            <person name="Sun H."/>
            <person name="Bradshaw-Cordum H."/>
            <person name="Ali J."/>
            <person name="Carter J."/>
            <person name="Cordes M."/>
            <person name="Harris A."/>
            <person name="Isak A."/>
            <person name="van Brunt A."/>
            <person name="Nguyen C."/>
            <person name="Du F."/>
            <person name="Courtney L."/>
            <person name="Kalicki J."/>
            <person name="Ozersky P."/>
            <person name="Abbott S."/>
            <person name="Armstrong J."/>
            <person name="Belter E.A."/>
            <person name="Caruso L."/>
            <person name="Cedroni M."/>
            <person name="Cotton M."/>
            <person name="Davidson T."/>
            <person name="Desai A."/>
            <person name="Elliott G."/>
            <person name="Erb T."/>
            <person name="Fronick C."/>
            <person name="Gaige T."/>
            <person name="Haakenson W."/>
            <person name="Haglund K."/>
            <person name="Holmes A."/>
            <person name="Harkins R."/>
            <person name="Kim K."/>
            <person name="Kruchowski S.S."/>
            <person name="Strong C.M."/>
            <person name="Grewal N."/>
            <person name="Goyea E."/>
            <person name="Hou S."/>
            <person name="Levy A."/>
            <person name="Martinka S."/>
            <person name="Mead K."/>
            <person name="McLellan M.D."/>
            <person name="Meyer R."/>
            <person name="Randall-Maher J."/>
            <person name="Tomlinson C."/>
            <person name="Dauphin-Kohlberg S."/>
            <person name="Kozlowicz-Reilly A."/>
            <person name="Shah N."/>
            <person name="Swearengen-Shahid S."/>
            <person name="Snider J."/>
            <person name="Strong J.T."/>
            <person name="Thompson J."/>
            <person name="Yoakum M."/>
            <person name="Leonard S."/>
            <person name="Pearman C."/>
            <person name="Trani L."/>
            <person name="Radionenko M."/>
            <person name="Waligorski J.E."/>
            <person name="Wang C."/>
            <person name="Rock S.M."/>
            <person name="Tin-Wollam A.-M."/>
            <person name="Maupin R."/>
            <person name="Latreille P."/>
            <person name="Wendl M.C."/>
            <person name="Yang S.-P."/>
            <person name="Pohl C."/>
            <person name="Wallis J.W."/>
            <person name="Spieth J."/>
            <person name="Bieri T.A."/>
            <person name="Berkowicz N."/>
            <person name="Nelson J.O."/>
            <person name="Osborne J."/>
            <person name="Ding L."/>
            <person name="Meyer R."/>
            <person name="Sabo A."/>
            <person name="Shotland Y."/>
            <person name="Sinha P."/>
            <person name="Wohldmann P.E."/>
            <person name="Cook L.L."/>
            <person name="Hickenbotham M.T."/>
            <person name="Eldred J."/>
            <person name="Williams D."/>
            <person name="Jones T.A."/>
            <person name="She X."/>
            <person name="Ciccarelli F.D."/>
            <person name="Izaurralde E."/>
            <person name="Taylor J."/>
            <person name="Schmutz J."/>
            <person name="Myers R.M."/>
            <person name="Cox D.R."/>
            <person name="Huang X."/>
            <person name="McPherson J.D."/>
            <person name="Mardis E.R."/>
            <person name="Clifton S.W."/>
            <person name="Warren W.C."/>
            <person name="Chinwalla A.T."/>
            <person name="Eddy S.R."/>
            <person name="Marra M.A."/>
            <person name="Ovcharenko I."/>
            <person name="Furey T.S."/>
            <person name="Miller W."/>
            <person name="Eichler E.E."/>
            <person name="Bork P."/>
            <person name="Suyama M."/>
            <person name="Torrents D."/>
            <person name="Waterston R.H."/>
            <person name="Wilson R.K."/>
        </authorList>
    </citation>
    <scope>NUCLEOTIDE SEQUENCE [LARGE SCALE GENOMIC DNA]</scope>
</reference>
<reference key="5">
    <citation type="journal article" date="2004" name="Genome Res.">
        <title>The status, quality, and expansion of the NIH full-length cDNA project: the Mammalian Gene Collection (MGC).</title>
        <authorList>
            <consortium name="The MGC Project Team"/>
        </authorList>
    </citation>
    <scope>NUCLEOTIDE SEQUENCE [LARGE SCALE MRNA] (ISOFORM 2)</scope>
    <scope>VARIANTS SER-19 AND THR-24</scope>
    <source>
        <tissue>Liver</tissue>
    </source>
</reference>
<reference key="6">
    <citation type="journal article" date="2001" name="J. Biol. Chem.">
        <title>The large subunit of the mammalian mitochondrial ribosome. Analysis of the complement of ribosomal proteins present.</title>
        <authorList>
            <person name="Koc E.C."/>
            <person name="Burkhart W."/>
            <person name="Blackburn K."/>
            <person name="Moyer M.B."/>
            <person name="Schlatzer D.M."/>
            <person name="Moseley A."/>
            <person name="Spremulli L.L."/>
        </authorList>
    </citation>
    <scope>IDENTIFICATION</scope>
</reference>
<reference key="7">
    <citation type="journal article" date="2011" name="BMC Syst. Biol.">
        <title>Initial characterization of the human central proteome.</title>
        <authorList>
            <person name="Burkard T.R."/>
            <person name="Planyavsky M."/>
            <person name="Kaupe I."/>
            <person name="Breitwieser F.P."/>
            <person name="Buerckstuemmer T."/>
            <person name="Bennett K.L."/>
            <person name="Superti-Furga G."/>
            <person name="Colinge J."/>
        </authorList>
    </citation>
    <scope>IDENTIFICATION BY MASS SPECTROMETRY [LARGE SCALE ANALYSIS]</scope>
</reference>
<reference evidence="12" key="8">
    <citation type="journal article" date="2014" name="Science">
        <title>Structure of the large ribosomal subunit from human mitochondria.</title>
        <authorList>
            <person name="Brown A."/>
            <person name="Amunts A."/>
            <person name="Bai X.C."/>
            <person name="Sugimoto Y."/>
            <person name="Edwards P.C."/>
            <person name="Murshudov G."/>
            <person name="Scheres S.H."/>
            <person name="Ramakrishnan V."/>
        </authorList>
    </citation>
    <scope>STRUCTURE BY ELECTRON MICROSCOPY (3.40 ANGSTROMS)</scope>
    <scope>SUBCELLULAR LOCATION</scope>
    <scope>SUBUNIT</scope>
</reference>
<reference evidence="13" key="9">
    <citation type="journal article" date="2015" name="Science">
        <title>Ribosome. The structure of the human mitochondrial ribosome.</title>
        <authorList>
            <person name="Amunts A."/>
            <person name="Brown A."/>
            <person name="Toots J."/>
            <person name="Scheres S.H."/>
            <person name="Ramakrishnan V."/>
        </authorList>
    </citation>
    <scope>STRUCTURE BY ELECTRON MICROSCOPY (3.50 ANGSTROMS)</scope>
    <scope>SUBCELLULAR LOCATION</scope>
    <scope>SUBUNIT</scope>
</reference>
<reference evidence="14 15" key="10">
    <citation type="journal article" date="2017" name="Nat. Struct. Mol. Biol.">
        <title>Structures of the human mitochondrial ribosome in native states of assembly.</title>
        <authorList>
            <person name="Brown A."/>
            <person name="Rathore S."/>
            <person name="Kimanius D."/>
            <person name="Aibara S."/>
            <person name="Bai X.C."/>
            <person name="Rorbach J."/>
            <person name="Amunts A."/>
            <person name="Ramakrishnan V."/>
        </authorList>
    </citation>
    <scope>STRUCTURE BY ELECTRON MICROSCOPY (3.03 ANGSTROMS)</scope>
    <scope>SUBCELLULAR LOCATION</scope>
    <scope>SUBUNIT</scope>
</reference>
<reference evidence="16 17" key="11">
    <citation type="journal article" date="2022" name="Nat. Commun.">
        <title>A late-stage assembly checkpoint of the human mitochondrial ribosome large subunit.</title>
        <authorList>
            <person name="Rebelo-Guiomar P."/>
            <person name="Pellegrino S."/>
            <person name="Dent K.C."/>
            <person name="Sas-Chen A."/>
            <person name="Miller-Fleming L."/>
            <person name="Garone C."/>
            <person name="Van Haute L."/>
            <person name="Rogan J.F."/>
            <person name="Dinan A."/>
            <person name="Firth A.E."/>
            <person name="Andrews B."/>
            <person name="Whitworth A.J."/>
            <person name="Schwartz S."/>
            <person name="Warren A.J."/>
            <person name="Minczuk M."/>
        </authorList>
    </citation>
    <scope>STRUCTURE BY ELECTRON MICROSCOPY (2.9 ANGSTROMS) IN COMPLEX WITH MTLSU</scope>
    <scope>SUBUNIT</scope>
</reference>
<feature type="transit peptide" description="Mitochondrion" evidence="1">
    <location>
        <begin position="1"/>
        <end status="unknown"/>
    </location>
</feature>
<feature type="chain" id="PRO_0000030525" description="Large ribosomal subunit protein bL35m">
    <location>
        <begin status="unknown"/>
        <end position="188"/>
    </location>
</feature>
<feature type="splice variant" id="VSP_036507" description="In isoform 2." evidence="7 8">
    <location>
        <begin position="171"/>
        <end position="188"/>
    </location>
</feature>
<feature type="sequence variant" id="VAR_030010" description="In dbSNP:rs10901." evidence="2">
    <original>P</original>
    <variation>S</variation>
    <location>
        <position position="19"/>
    </location>
</feature>
<feature type="sequence variant" id="VAR_054632" description="In dbSNP:rs17851803." evidence="2">
    <original>A</original>
    <variation>T</variation>
    <location>
        <position position="24"/>
    </location>
</feature>
<feature type="sequence variant" id="VAR_054633" description="In dbSNP:rs1051949.">
    <original>R</original>
    <variation>H</variation>
    <location>
        <position position="29"/>
    </location>
</feature>
<feature type="sequence variant" id="VAR_034463" description="In dbSNP:rs34044771.">
    <original>A</original>
    <variation>P</variation>
    <location>
        <position position="80"/>
    </location>
</feature>
<feature type="sequence variant" id="VAR_051803" description="In dbSNP:rs3192352.">
    <original>P</original>
    <variation>L</variation>
    <location>
        <position position="81"/>
    </location>
</feature>
<feature type="sequence variant" id="VAR_054634" description="In dbSNP:rs1052065.">
    <original>Y</original>
    <variation>C</variation>
    <location>
        <position position="180"/>
    </location>
</feature>
<feature type="turn" evidence="19">
    <location>
        <begin position="99"/>
        <end position="101"/>
    </location>
</feature>
<feature type="helix" evidence="19">
    <location>
        <begin position="108"/>
        <end position="111"/>
    </location>
</feature>
<feature type="strand" evidence="18">
    <location>
        <begin position="114"/>
        <end position="116"/>
    </location>
</feature>
<feature type="turn" evidence="20">
    <location>
        <begin position="118"/>
        <end position="120"/>
    </location>
</feature>
<feature type="strand" evidence="19">
    <location>
        <begin position="122"/>
        <end position="124"/>
    </location>
</feature>
<feature type="turn" evidence="19">
    <location>
        <begin position="127"/>
        <end position="130"/>
    </location>
</feature>
<feature type="helix" evidence="19">
    <location>
        <begin position="133"/>
        <end position="135"/>
    </location>
</feature>
<feature type="helix" evidence="19">
    <location>
        <begin position="138"/>
        <end position="144"/>
    </location>
</feature>
<feature type="strand" evidence="21">
    <location>
        <begin position="145"/>
        <end position="149"/>
    </location>
</feature>
<feature type="helix" evidence="19">
    <location>
        <begin position="152"/>
        <end position="161"/>
    </location>
</feature>
<feature type="helix" evidence="19">
    <location>
        <begin position="164"/>
        <end position="167"/>
    </location>
</feature>
<feature type="strand" evidence="21">
    <location>
        <begin position="172"/>
        <end position="174"/>
    </location>
</feature>
<feature type="turn" evidence="19">
    <location>
        <begin position="176"/>
        <end position="178"/>
    </location>
</feature>
<feature type="helix" evidence="19">
    <location>
        <begin position="179"/>
        <end position="181"/>
    </location>
</feature>
<gene>
    <name type="primary">MRPL35</name>
    <name type="ORF">BM-007</name>
</gene>
<keyword id="KW-0002">3D-structure</keyword>
<keyword id="KW-0025">Alternative splicing</keyword>
<keyword id="KW-0496">Mitochondrion</keyword>
<keyword id="KW-1267">Proteomics identification</keyword>
<keyword id="KW-1185">Reference proteome</keyword>
<keyword id="KW-0687">Ribonucleoprotein</keyword>
<keyword id="KW-0689">Ribosomal protein</keyword>
<keyword id="KW-0809">Transit peptide</keyword>
<organism evidence="11">
    <name type="scientific">Homo sapiens</name>
    <name type="common">Human</name>
    <dbReference type="NCBI Taxonomy" id="9606"/>
    <lineage>
        <taxon>Eukaryota</taxon>
        <taxon>Metazoa</taxon>
        <taxon>Chordata</taxon>
        <taxon>Craniata</taxon>
        <taxon>Vertebrata</taxon>
        <taxon>Euteleostomi</taxon>
        <taxon>Mammalia</taxon>
        <taxon>Eutheria</taxon>
        <taxon>Euarchontoglires</taxon>
        <taxon>Primates</taxon>
        <taxon>Haplorrhini</taxon>
        <taxon>Catarrhini</taxon>
        <taxon>Hominidae</taxon>
        <taxon>Homo</taxon>
    </lineage>
</organism>
<name>RM35_HUMAN</name>
<evidence type="ECO:0000255" key="1"/>
<evidence type="ECO:0000269" key="2">
    <source>
    </source>
</evidence>
<evidence type="ECO:0000269" key="3">
    <source>
    </source>
</evidence>
<evidence type="ECO:0000269" key="4">
    <source>
    </source>
</evidence>
<evidence type="ECO:0000269" key="5">
    <source>
    </source>
</evidence>
<evidence type="ECO:0000269" key="6">
    <source>
    </source>
</evidence>
<evidence type="ECO:0000303" key="7">
    <source>
    </source>
</evidence>
<evidence type="ECO:0000303" key="8">
    <source>
    </source>
</evidence>
<evidence type="ECO:0000303" key="9">
    <source>
    </source>
</evidence>
<evidence type="ECO:0000305" key="10"/>
<evidence type="ECO:0000312" key="11">
    <source>
        <dbReference type="EMBL" id="AAF64263.1"/>
    </source>
</evidence>
<evidence type="ECO:0007744" key="12">
    <source>
        <dbReference type="PDB" id="3J7Y"/>
    </source>
</evidence>
<evidence type="ECO:0007744" key="13">
    <source>
        <dbReference type="PDB" id="3J9M"/>
    </source>
</evidence>
<evidence type="ECO:0007744" key="14">
    <source>
        <dbReference type="PDB" id="5OOL"/>
    </source>
</evidence>
<evidence type="ECO:0007744" key="15">
    <source>
        <dbReference type="PDB" id="5OOM"/>
    </source>
</evidence>
<evidence type="ECO:0007744" key="16">
    <source>
        <dbReference type="PDB" id="7QH6"/>
    </source>
</evidence>
<evidence type="ECO:0007744" key="17">
    <source>
        <dbReference type="PDB" id="7QH7"/>
    </source>
</evidence>
<evidence type="ECO:0007829" key="18">
    <source>
        <dbReference type="PDB" id="3J7Y"/>
    </source>
</evidence>
<evidence type="ECO:0007829" key="19">
    <source>
        <dbReference type="PDB" id="7OF0"/>
    </source>
</evidence>
<evidence type="ECO:0007829" key="20">
    <source>
        <dbReference type="PDB" id="7OI8"/>
    </source>
</evidence>
<evidence type="ECO:0007829" key="21">
    <source>
        <dbReference type="PDB" id="8QU5"/>
    </source>
</evidence>
<accession>Q9NZE8</accession>
<accession>A6NKV6</accession>
<accession>B2RB93</accession>
<accession>Q658U7</accession>
<accession>Q8WWA2</accession>
<dbReference type="EMBL" id="AF208849">
    <property type="protein sequence ID" value="AAF64263.1"/>
    <property type="status" value="ALT_FRAME"/>
    <property type="molecule type" value="mRNA"/>
</dbReference>
<dbReference type="EMBL" id="AK314555">
    <property type="protein sequence ID" value="BAG37140.1"/>
    <property type="molecule type" value="mRNA"/>
</dbReference>
<dbReference type="EMBL" id="AK314577">
    <property type="protein sequence ID" value="BAG37154.1"/>
    <property type="molecule type" value="mRNA"/>
</dbReference>
<dbReference type="EMBL" id="AL832982">
    <property type="protein sequence ID" value="CAH56349.1"/>
    <property type="molecule type" value="mRNA"/>
</dbReference>
<dbReference type="EMBL" id="AC009309">
    <property type="status" value="NOT_ANNOTATED_CDS"/>
    <property type="molecule type" value="Genomic_DNA"/>
</dbReference>
<dbReference type="EMBL" id="BC020651">
    <property type="protein sequence ID" value="AAH20651.1"/>
    <property type="molecule type" value="mRNA"/>
</dbReference>
<dbReference type="CCDS" id="CCDS1987.1">
    <molecule id="Q9NZE8-2"/>
</dbReference>
<dbReference type="CCDS" id="CCDS1988.1">
    <molecule id="Q9NZE8-1"/>
</dbReference>
<dbReference type="RefSeq" id="NP_057706.2">
    <molecule id="Q9NZE8-1"/>
    <property type="nucleotide sequence ID" value="NM_016622.3"/>
</dbReference>
<dbReference type="RefSeq" id="NP_663619.1">
    <molecule id="Q9NZE8-2"/>
    <property type="nucleotide sequence ID" value="NM_145644.3"/>
</dbReference>
<dbReference type="PDB" id="3J7Y">
    <property type="method" value="EM"/>
    <property type="resolution" value="3.40 A"/>
    <property type="chains" value="3=1-188"/>
</dbReference>
<dbReference type="PDB" id="3J9M">
    <property type="method" value="EM"/>
    <property type="resolution" value="3.50 A"/>
    <property type="chains" value="3=1-188"/>
</dbReference>
<dbReference type="PDB" id="5OOL">
    <property type="method" value="EM"/>
    <property type="resolution" value="3.06 A"/>
    <property type="chains" value="3=1-188"/>
</dbReference>
<dbReference type="PDB" id="5OOM">
    <property type="method" value="EM"/>
    <property type="resolution" value="3.03 A"/>
    <property type="chains" value="3=1-188"/>
</dbReference>
<dbReference type="PDB" id="6I9R">
    <property type="method" value="EM"/>
    <property type="resolution" value="3.90 A"/>
    <property type="chains" value="3=1-188"/>
</dbReference>
<dbReference type="PDB" id="6NU2">
    <property type="method" value="EM"/>
    <property type="resolution" value="3.90 A"/>
    <property type="chains" value="3=94-188"/>
</dbReference>
<dbReference type="PDB" id="6NU3">
    <property type="method" value="EM"/>
    <property type="resolution" value="4.40 A"/>
    <property type="chains" value="3=1-188"/>
</dbReference>
<dbReference type="PDB" id="6VLZ">
    <property type="method" value="EM"/>
    <property type="resolution" value="2.97 A"/>
    <property type="chains" value="3=1-188"/>
</dbReference>
<dbReference type="PDB" id="6VMI">
    <property type="method" value="EM"/>
    <property type="resolution" value="2.96 A"/>
    <property type="chains" value="3=1-188"/>
</dbReference>
<dbReference type="PDB" id="6ZM5">
    <property type="method" value="EM"/>
    <property type="resolution" value="2.89 A"/>
    <property type="chains" value="3=1-188"/>
</dbReference>
<dbReference type="PDB" id="6ZM6">
    <property type="method" value="EM"/>
    <property type="resolution" value="2.59 A"/>
    <property type="chains" value="3=1-188"/>
</dbReference>
<dbReference type="PDB" id="6ZS9">
    <property type="method" value="EM"/>
    <property type="resolution" value="4.00 A"/>
    <property type="chains" value="3=1-188"/>
</dbReference>
<dbReference type="PDB" id="6ZSA">
    <property type="method" value="EM"/>
    <property type="resolution" value="4.00 A"/>
    <property type="chains" value="3=1-188"/>
</dbReference>
<dbReference type="PDB" id="6ZSB">
    <property type="method" value="EM"/>
    <property type="resolution" value="4.50 A"/>
    <property type="chains" value="3=1-188"/>
</dbReference>
<dbReference type="PDB" id="6ZSC">
    <property type="method" value="EM"/>
    <property type="resolution" value="3.50 A"/>
    <property type="chains" value="3=1-188"/>
</dbReference>
<dbReference type="PDB" id="6ZSD">
    <property type="method" value="EM"/>
    <property type="resolution" value="3.70 A"/>
    <property type="chains" value="3=1-188"/>
</dbReference>
<dbReference type="PDB" id="6ZSE">
    <property type="method" value="EM"/>
    <property type="resolution" value="5.00 A"/>
    <property type="chains" value="3=1-188"/>
</dbReference>
<dbReference type="PDB" id="6ZSG">
    <property type="method" value="EM"/>
    <property type="resolution" value="4.00 A"/>
    <property type="chains" value="3=1-188"/>
</dbReference>
<dbReference type="PDB" id="7A5F">
    <property type="method" value="EM"/>
    <property type="resolution" value="4.40 A"/>
    <property type="chains" value="33=1-188"/>
</dbReference>
<dbReference type="PDB" id="7A5G">
    <property type="method" value="EM"/>
    <property type="resolution" value="4.33 A"/>
    <property type="chains" value="33=1-188"/>
</dbReference>
<dbReference type="PDB" id="7A5H">
    <property type="method" value="EM"/>
    <property type="resolution" value="3.30 A"/>
    <property type="chains" value="3=1-188"/>
</dbReference>
<dbReference type="PDB" id="7A5I">
    <property type="method" value="EM"/>
    <property type="resolution" value="3.70 A"/>
    <property type="chains" value="33=1-188"/>
</dbReference>
<dbReference type="PDB" id="7A5J">
    <property type="method" value="EM"/>
    <property type="resolution" value="3.10 A"/>
    <property type="chains" value="3=1-188"/>
</dbReference>
<dbReference type="PDB" id="7A5K">
    <property type="method" value="EM"/>
    <property type="resolution" value="3.70 A"/>
    <property type="chains" value="33=1-188"/>
</dbReference>
<dbReference type="PDB" id="7L08">
    <property type="method" value="EM"/>
    <property type="resolution" value="3.49 A"/>
    <property type="chains" value="3=1-188"/>
</dbReference>
<dbReference type="PDB" id="7L20">
    <property type="method" value="EM"/>
    <property type="resolution" value="3.15 A"/>
    <property type="chains" value="3=1-188"/>
</dbReference>
<dbReference type="PDB" id="7O9K">
    <property type="method" value="EM"/>
    <property type="resolution" value="3.10 A"/>
    <property type="chains" value="3=1-188"/>
</dbReference>
<dbReference type="PDB" id="7O9M">
    <property type="method" value="EM"/>
    <property type="resolution" value="2.50 A"/>
    <property type="chains" value="3=1-188"/>
</dbReference>
<dbReference type="PDB" id="7ODR">
    <property type="method" value="EM"/>
    <property type="resolution" value="2.90 A"/>
    <property type="chains" value="3=1-188"/>
</dbReference>
<dbReference type="PDB" id="7ODS">
    <property type="method" value="EM"/>
    <property type="resolution" value="3.10 A"/>
    <property type="chains" value="3=1-188"/>
</dbReference>
<dbReference type="PDB" id="7ODT">
    <property type="method" value="EM"/>
    <property type="resolution" value="3.10 A"/>
    <property type="chains" value="3=1-188"/>
</dbReference>
<dbReference type="PDB" id="7OF0">
    <property type="method" value="EM"/>
    <property type="resolution" value="2.20 A"/>
    <property type="chains" value="3=1-188"/>
</dbReference>
<dbReference type="PDB" id="7OF2">
    <property type="method" value="EM"/>
    <property type="resolution" value="2.70 A"/>
    <property type="chains" value="3=1-188"/>
</dbReference>
<dbReference type="PDB" id="7OF3">
    <property type="method" value="EM"/>
    <property type="resolution" value="2.70 A"/>
    <property type="chains" value="3=1-188"/>
</dbReference>
<dbReference type="PDB" id="7OF4">
    <property type="method" value="EM"/>
    <property type="resolution" value="2.70 A"/>
    <property type="chains" value="3=1-188"/>
</dbReference>
<dbReference type="PDB" id="7OF5">
    <property type="method" value="EM"/>
    <property type="resolution" value="2.90 A"/>
    <property type="chains" value="3=1-188"/>
</dbReference>
<dbReference type="PDB" id="7OF6">
    <property type="method" value="EM"/>
    <property type="resolution" value="2.60 A"/>
    <property type="chains" value="3=1-188"/>
</dbReference>
<dbReference type="PDB" id="7OF7">
    <property type="method" value="EM"/>
    <property type="resolution" value="2.50 A"/>
    <property type="chains" value="3=1-188"/>
</dbReference>
<dbReference type="PDB" id="7OG4">
    <property type="method" value="EM"/>
    <property type="resolution" value="3.80 A"/>
    <property type="chains" value="3=1-188"/>
</dbReference>
<dbReference type="PDB" id="7OI7">
    <property type="method" value="EM"/>
    <property type="resolution" value="3.50 A"/>
    <property type="chains" value="3=1-188"/>
</dbReference>
<dbReference type="PDB" id="7OI8">
    <property type="method" value="EM"/>
    <property type="resolution" value="3.50 A"/>
    <property type="chains" value="3=1-188"/>
</dbReference>
<dbReference type="PDB" id="7OI9">
    <property type="method" value="EM"/>
    <property type="resolution" value="3.30 A"/>
    <property type="chains" value="3=1-188"/>
</dbReference>
<dbReference type="PDB" id="7OIA">
    <property type="method" value="EM"/>
    <property type="resolution" value="3.20 A"/>
    <property type="chains" value="3=1-188"/>
</dbReference>
<dbReference type="PDB" id="7OIB">
    <property type="method" value="EM"/>
    <property type="resolution" value="3.30 A"/>
    <property type="chains" value="3=1-188"/>
</dbReference>
<dbReference type="PDB" id="7OIC">
    <property type="method" value="EM"/>
    <property type="resolution" value="3.10 A"/>
    <property type="chains" value="3=1-188"/>
</dbReference>
<dbReference type="PDB" id="7OID">
    <property type="method" value="EM"/>
    <property type="resolution" value="3.70 A"/>
    <property type="chains" value="3=1-188"/>
</dbReference>
<dbReference type="PDB" id="7OIE">
    <property type="method" value="EM"/>
    <property type="resolution" value="3.50 A"/>
    <property type="chains" value="3=1-188"/>
</dbReference>
<dbReference type="PDB" id="7PD3">
    <property type="method" value="EM"/>
    <property type="resolution" value="3.40 A"/>
    <property type="chains" value="3=1-188"/>
</dbReference>
<dbReference type="PDB" id="7PO4">
    <property type="method" value="EM"/>
    <property type="resolution" value="2.56 A"/>
    <property type="chains" value="3=1-188"/>
</dbReference>
<dbReference type="PDB" id="7QH6">
    <property type="method" value="EM"/>
    <property type="resolution" value="3.08 A"/>
    <property type="chains" value="3=1-188"/>
</dbReference>
<dbReference type="PDB" id="7QH7">
    <property type="method" value="EM"/>
    <property type="resolution" value="2.89 A"/>
    <property type="chains" value="3=94-188"/>
</dbReference>
<dbReference type="PDB" id="7QI4">
    <property type="method" value="EM"/>
    <property type="resolution" value="2.21 A"/>
    <property type="chains" value="3=1-188"/>
</dbReference>
<dbReference type="PDB" id="7QI5">
    <property type="method" value="EM"/>
    <property type="resolution" value="2.63 A"/>
    <property type="chains" value="3=1-188"/>
</dbReference>
<dbReference type="PDB" id="7QI6">
    <property type="method" value="EM"/>
    <property type="resolution" value="2.98 A"/>
    <property type="chains" value="3=1-188"/>
</dbReference>
<dbReference type="PDB" id="8ANY">
    <property type="method" value="EM"/>
    <property type="resolution" value="2.85 A"/>
    <property type="chains" value="3=1-188"/>
</dbReference>
<dbReference type="PDB" id="8K2A">
    <property type="method" value="EM"/>
    <property type="resolution" value="2.90 A"/>
    <property type="chains" value="Li=1-188"/>
</dbReference>
<dbReference type="PDB" id="8K2B">
    <property type="method" value="EM"/>
    <property type="resolution" value="3.40 A"/>
    <property type="chains" value="Li=1-188"/>
</dbReference>
<dbReference type="PDB" id="8OIR">
    <property type="method" value="EM"/>
    <property type="resolution" value="3.10 A"/>
    <property type="chains" value="BK=1-188"/>
</dbReference>
<dbReference type="PDB" id="8OIT">
    <property type="method" value="EM"/>
    <property type="resolution" value="2.90 A"/>
    <property type="chains" value="BK=1-188"/>
</dbReference>
<dbReference type="PDB" id="8PK0">
    <property type="method" value="EM"/>
    <property type="resolution" value="3.03 A"/>
    <property type="chains" value="3=1-188"/>
</dbReference>
<dbReference type="PDB" id="8QSJ">
    <property type="method" value="EM"/>
    <property type="resolution" value="3.00 A"/>
    <property type="chains" value="3=1-188"/>
</dbReference>
<dbReference type="PDB" id="8QU1">
    <property type="method" value="EM"/>
    <property type="resolution" value="2.74 A"/>
    <property type="chains" value="3=1-188"/>
</dbReference>
<dbReference type="PDB" id="8QU5">
    <property type="method" value="EM"/>
    <property type="resolution" value="2.42 A"/>
    <property type="chains" value="3=1-188"/>
</dbReference>
<dbReference type="PDB" id="8RRI">
    <property type="method" value="EM"/>
    <property type="resolution" value="2.40 A"/>
    <property type="chains" value="3=1-188"/>
</dbReference>
<dbReference type="PDB" id="8XT0">
    <property type="method" value="EM"/>
    <property type="resolution" value="3.20 A"/>
    <property type="chains" value="Li=1-188"/>
</dbReference>
<dbReference type="PDB" id="8XT1">
    <property type="method" value="EM"/>
    <property type="resolution" value="3.10 A"/>
    <property type="chains" value="Li=1-188"/>
</dbReference>
<dbReference type="PDB" id="8XT2">
    <property type="method" value="EM"/>
    <property type="resolution" value="3.30 A"/>
    <property type="chains" value="Li=1-188"/>
</dbReference>
<dbReference type="PDB" id="8XT3">
    <property type="method" value="EM"/>
    <property type="resolution" value="3.10 A"/>
    <property type="chains" value="Li=1-188"/>
</dbReference>
<dbReference type="PDBsum" id="3J7Y"/>
<dbReference type="PDBsum" id="3J9M"/>
<dbReference type="PDBsum" id="5OOL"/>
<dbReference type="PDBsum" id="5OOM"/>
<dbReference type="PDBsum" id="6I9R"/>
<dbReference type="PDBsum" id="6NU2"/>
<dbReference type="PDBsum" id="6NU3"/>
<dbReference type="PDBsum" id="6VLZ"/>
<dbReference type="PDBsum" id="6VMI"/>
<dbReference type="PDBsum" id="6ZM5"/>
<dbReference type="PDBsum" id="6ZM6"/>
<dbReference type="PDBsum" id="6ZS9"/>
<dbReference type="PDBsum" id="6ZSA"/>
<dbReference type="PDBsum" id="6ZSB"/>
<dbReference type="PDBsum" id="6ZSC"/>
<dbReference type="PDBsum" id="6ZSD"/>
<dbReference type="PDBsum" id="6ZSE"/>
<dbReference type="PDBsum" id="6ZSG"/>
<dbReference type="PDBsum" id="7A5F"/>
<dbReference type="PDBsum" id="7A5G"/>
<dbReference type="PDBsum" id="7A5H"/>
<dbReference type="PDBsum" id="7A5I"/>
<dbReference type="PDBsum" id="7A5J"/>
<dbReference type="PDBsum" id="7A5K"/>
<dbReference type="PDBsum" id="7L08"/>
<dbReference type="PDBsum" id="7L20"/>
<dbReference type="PDBsum" id="7O9K"/>
<dbReference type="PDBsum" id="7O9M"/>
<dbReference type="PDBsum" id="7ODR"/>
<dbReference type="PDBsum" id="7ODS"/>
<dbReference type="PDBsum" id="7ODT"/>
<dbReference type="PDBsum" id="7OF0"/>
<dbReference type="PDBsum" id="7OF2"/>
<dbReference type="PDBsum" id="7OF3"/>
<dbReference type="PDBsum" id="7OF4"/>
<dbReference type="PDBsum" id="7OF5"/>
<dbReference type="PDBsum" id="7OF6"/>
<dbReference type="PDBsum" id="7OF7"/>
<dbReference type="PDBsum" id="7OG4"/>
<dbReference type="PDBsum" id="7OI7"/>
<dbReference type="PDBsum" id="7OI8"/>
<dbReference type="PDBsum" id="7OI9"/>
<dbReference type="PDBsum" id="7OIA"/>
<dbReference type="PDBsum" id="7OIB"/>
<dbReference type="PDBsum" id="7OIC"/>
<dbReference type="PDBsum" id="7OID"/>
<dbReference type="PDBsum" id="7OIE"/>
<dbReference type="PDBsum" id="7PD3"/>
<dbReference type="PDBsum" id="7PO4"/>
<dbReference type="PDBsum" id="7QH6"/>
<dbReference type="PDBsum" id="7QH7"/>
<dbReference type="PDBsum" id="7QI4"/>
<dbReference type="PDBsum" id="7QI5"/>
<dbReference type="PDBsum" id="7QI6"/>
<dbReference type="PDBsum" id="8ANY"/>
<dbReference type="PDBsum" id="8K2A"/>
<dbReference type="PDBsum" id="8K2B"/>
<dbReference type="PDBsum" id="8OIR"/>
<dbReference type="PDBsum" id="8OIT"/>
<dbReference type="PDBsum" id="8PK0"/>
<dbReference type="PDBsum" id="8QSJ"/>
<dbReference type="PDBsum" id="8QU1"/>
<dbReference type="PDBsum" id="8QU5"/>
<dbReference type="PDBsum" id="8RRI"/>
<dbReference type="PDBsum" id="8XT0"/>
<dbReference type="PDBsum" id="8XT1"/>
<dbReference type="PDBsum" id="8XT2"/>
<dbReference type="PDBsum" id="8XT3"/>
<dbReference type="EMDB" id="EMD-0514"/>
<dbReference type="EMDB" id="EMD-0515"/>
<dbReference type="EMDB" id="EMD-11278"/>
<dbReference type="EMDB" id="EMD-11279"/>
<dbReference type="EMDB" id="EMD-11390"/>
<dbReference type="EMDB" id="EMD-11391"/>
<dbReference type="EMDB" id="EMD-11392"/>
<dbReference type="EMDB" id="EMD-11393"/>
<dbReference type="EMDB" id="EMD-11394"/>
<dbReference type="EMDB" id="EMD-11395"/>
<dbReference type="EMDB" id="EMD-11397"/>
<dbReference type="EMDB" id="EMD-11641"/>
<dbReference type="EMDB" id="EMD-11642"/>
<dbReference type="EMDB" id="EMD-11643"/>
<dbReference type="EMDB" id="EMD-11644"/>
<dbReference type="EMDB" id="EMD-11645"/>
<dbReference type="EMDB" id="EMD-11646"/>
<dbReference type="EMDB" id="EMD-12763"/>
<dbReference type="EMDB" id="EMD-12764"/>
<dbReference type="EMDB" id="EMD-12845"/>
<dbReference type="EMDB" id="EMD-12846"/>
<dbReference type="EMDB" id="EMD-12847"/>
<dbReference type="EMDB" id="EMD-12865"/>
<dbReference type="EMDB" id="EMD-12867"/>
<dbReference type="EMDB" id="EMD-12868"/>
<dbReference type="EMDB" id="EMD-12869"/>
<dbReference type="EMDB" id="EMD-12870"/>
<dbReference type="EMDB" id="EMD-12871"/>
<dbReference type="EMDB" id="EMD-12872"/>
<dbReference type="EMDB" id="EMD-12877"/>
<dbReference type="EMDB" id="EMD-12920"/>
<dbReference type="EMDB" id="EMD-12921"/>
<dbReference type="EMDB" id="EMD-12922"/>
<dbReference type="EMDB" id="EMD-12923"/>
<dbReference type="EMDB" id="EMD-12924"/>
<dbReference type="EMDB" id="EMD-12925"/>
<dbReference type="EMDB" id="EMD-12926"/>
<dbReference type="EMDB" id="EMD-12927"/>
<dbReference type="EMDB" id="EMD-13329"/>
<dbReference type="EMDB" id="EMD-13562"/>
<dbReference type="EMDB" id="EMD-13965"/>
<dbReference type="EMDB" id="EMD-13967"/>
<dbReference type="EMDB" id="EMD-13980"/>
<dbReference type="EMDB" id="EMD-13981"/>
<dbReference type="EMDB" id="EMD-13982"/>
<dbReference type="EMDB" id="EMD-15544"/>
<dbReference type="EMDB" id="EMD-16897"/>
<dbReference type="EMDB" id="EMD-16899"/>
<dbReference type="EMDB" id="EMD-17719"/>
<dbReference type="EMDB" id="EMD-19460"/>
<dbReference type="EMDB" id="EMD-21233"/>
<dbReference type="EMDB" id="EMD-21242"/>
<dbReference type="EMDB" id="EMD-23096"/>
<dbReference type="EMDB" id="EMD-23121"/>
<dbReference type="EMDB" id="EMD-36836"/>
<dbReference type="EMDB" id="EMD-36837"/>
<dbReference type="EMDB" id="EMD-3842"/>
<dbReference type="EMDB" id="EMD-3843"/>
<dbReference type="EMDB" id="EMD-38632"/>
<dbReference type="EMDB" id="EMD-38633"/>
<dbReference type="EMDB" id="EMD-38634"/>
<dbReference type="EMDB" id="EMD-38635"/>
<dbReference type="EMDB" id="EMD-4434"/>
<dbReference type="SMR" id="Q9NZE8"/>
<dbReference type="BioGRID" id="119469">
    <property type="interactions" value="100"/>
</dbReference>
<dbReference type="ComplexPortal" id="CPX-5226">
    <property type="entry name" value="39S mitochondrial large ribosomal subunit"/>
</dbReference>
<dbReference type="CORUM" id="Q9NZE8"/>
<dbReference type="FunCoup" id="Q9NZE8">
    <property type="interactions" value="1079"/>
</dbReference>
<dbReference type="IntAct" id="Q9NZE8">
    <property type="interactions" value="88"/>
</dbReference>
<dbReference type="MINT" id="Q9NZE8"/>
<dbReference type="STRING" id="9606.ENSP00000338389"/>
<dbReference type="iPTMnet" id="Q9NZE8"/>
<dbReference type="PhosphoSitePlus" id="Q9NZE8"/>
<dbReference type="BioMuta" id="MRPL35"/>
<dbReference type="jPOST" id="Q9NZE8"/>
<dbReference type="MassIVE" id="Q9NZE8"/>
<dbReference type="PaxDb" id="9606-ENSP00000338389"/>
<dbReference type="PeptideAtlas" id="Q9NZE8"/>
<dbReference type="ProteomicsDB" id="83381">
    <molecule id="Q9NZE8-1"/>
</dbReference>
<dbReference type="ProteomicsDB" id="83382">
    <molecule id="Q9NZE8-2"/>
</dbReference>
<dbReference type="Pumba" id="Q9NZE8"/>
<dbReference type="Antibodypedia" id="51696">
    <property type="antibodies" value="40 antibodies from 17 providers"/>
</dbReference>
<dbReference type="DNASU" id="51318"/>
<dbReference type="Ensembl" id="ENST00000254644.12">
    <molecule id="Q9NZE8-2"/>
    <property type="protein sequence ID" value="ENSP00000254644.7"/>
    <property type="gene ID" value="ENSG00000132313.15"/>
</dbReference>
<dbReference type="Ensembl" id="ENST00000337109.9">
    <molecule id="Q9NZE8-1"/>
    <property type="protein sequence ID" value="ENSP00000338389.4"/>
    <property type="gene ID" value="ENSG00000132313.15"/>
</dbReference>
<dbReference type="GeneID" id="51318"/>
<dbReference type="KEGG" id="hsa:51318"/>
<dbReference type="MANE-Select" id="ENST00000337109.9">
    <property type="protein sequence ID" value="ENSP00000338389.4"/>
    <property type="RefSeq nucleotide sequence ID" value="NM_016622.4"/>
    <property type="RefSeq protein sequence ID" value="NP_057706.2"/>
</dbReference>
<dbReference type="UCSC" id="uc002srg.5">
    <molecule id="Q9NZE8-1"/>
    <property type="organism name" value="human"/>
</dbReference>
<dbReference type="AGR" id="HGNC:14489"/>
<dbReference type="CTD" id="51318"/>
<dbReference type="DisGeNET" id="51318"/>
<dbReference type="GeneCards" id="MRPL35"/>
<dbReference type="HGNC" id="HGNC:14489">
    <property type="gene designation" value="MRPL35"/>
</dbReference>
<dbReference type="HPA" id="ENSG00000132313">
    <property type="expression patterns" value="Low tissue specificity"/>
</dbReference>
<dbReference type="MIM" id="611841">
    <property type="type" value="gene"/>
</dbReference>
<dbReference type="neXtProt" id="NX_Q9NZE8"/>
<dbReference type="OpenTargets" id="ENSG00000132313"/>
<dbReference type="PharmGKB" id="PA30966"/>
<dbReference type="VEuPathDB" id="HostDB:ENSG00000132313"/>
<dbReference type="eggNOG" id="KOG4316">
    <property type="taxonomic scope" value="Eukaryota"/>
</dbReference>
<dbReference type="GeneTree" id="ENSGT00390000007547"/>
<dbReference type="HOGENOM" id="CLU_123951_0_0_1"/>
<dbReference type="InParanoid" id="Q9NZE8"/>
<dbReference type="OMA" id="TYCSTRK"/>
<dbReference type="OrthoDB" id="5847109at2759"/>
<dbReference type="PAN-GO" id="Q9NZE8">
    <property type="GO annotations" value="1 GO annotation based on evolutionary models"/>
</dbReference>
<dbReference type="PhylomeDB" id="Q9NZE8"/>
<dbReference type="TreeFam" id="TF317642"/>
<dbReference type="PathwayCommons" id="Q9NZE8"/>
<dbReference type="Reactome" id="R-HSA-5368286">
    <property type="pathway name" value="Mitochondrial translation initiation"/>
</dbReference>
<dbReference type="Reactome" id="R-HSA-5389840">
    <property type="pathway name" value="Mitochondrial translation elongation"/>
</dbReference>
<dbReference type="Reactome" id="R-HSA-5419276">
    <property type="pathway name" value="Mitochondrial translation termination"/>
</dbReference>
<dbReference type="SignaLink" id="Q9NZE8"/>
<dbReference type="SIGNOR" id="Q9NZE8"/>
<dbReference type="BioGRID-ORCS" id="51318">
    <property type="hits" value="412 hits in 1129 CRISPR screens"/>
</dbReference>
<dbReference type="ChiTaRS" id="MRPL35">
    <property type="organism name" value="human"/>
</dbReference>
<dbReference type="EvolutionaryTrace" id="Q9NZE8"/>
<dbReference type="GenomeRNAi" id="51318"/>
<dbReference type="Pharos" id="Q9NZE8">
    <property type="development level" value="Tdark"/>
</dbReference>
<dbReference type="PRO" id="PR:Q9NZE8"/>
<dbReference type="Proteomes" id="UP000005640">
    <property type="component" value="Chromosome 2"/>
</dbReference>
<dbReference type="RNAct" id="Q9NZE8">
    <property type="molecule type" value="protein"/>
</dbReference>
<dbReference type="Bgee" id="ENSG00000132313">
    <property type="expression patterns" value="Expressed in rectum and 197 other cell types or tissues"/>
</dbReference>
<dbReference type="ExpressionAtlas" id="Q9NZE8">
    <property type="expression patterns" value="baseline and differential"/>
</dbReference>
<dbReference type="GO" id="GO:0005743">
    <property type="term" value="C:mitochondrial inner membrane"/>
    <property type="evidence" value="ECO:0000304"/>
    <property type="project" value="Reactome"/>
</dbReference>
<dbReference type="GO" id="GO:0005762">
    <property type="term" value="C:mitochondrial large ribosomal subunit"/>
    <property type="evidence" value="ECO:0000314"/>
    <property type="project" value="UniProtKB"/>
</dbReference>
<dbReference type="GO" id="GO:0005761">
    <property type="term" value="C:mitochondrial ribosome"/>
    <property type="evidence" value="ECO:0000303"/>
    <property type="project" value="UniProtKB"/>
</dbReference>
<dbReference type="GO" id="GO:0005739">
    <property type="term" value="C:mitochondrion"/>
    <property type="evidence" value="ECO:0000314"/>
    <property type="project" value="UniProtKB"/>
</dbReference>
<dbReference type="GO" id="GO:0003735">
    <property type="term" value="F:structural constituent of ribosome"/>
    <property type="evidence" value="ECO:0000303"/>
    <property type="project" value="UniProtKB"/>
</dbReference>
<dbReference type="GO" id="GO:0032543">
    <property type="term" value="P:mitochondrial translation"/>
    <property type="evidence" value="ECO:0000303"/>
    <property type="project" value="ComplexPortal"/>
</dbReference>
<dbReference type="GO" id="GO:0006412">
    <property type="term" value="P:translation"/>
    <property type="evidence" value="ECO:0000303"/>
    <property type="project" value="UniProtKB"/>
</dbReference>
<dbReference type="Gene3D" id="4.10.410.60">
    <property type="match status" value="1"/>
</dbReference>
<dbReference type="InterPro" id="IPR021137">
    <property type="entry name" value="Ribosomal_bL35-like"/>
</dbReference>
<dbReference type="InterPro" id="IPR037229">
    <property type="entry name" value="Ribosomal_bL35_sf"/>
</dbReference>
<dbReference type="InterPro" id="IPR019338">
    <property type="entry name" value="Ribosomal_bL35m"/>
</dbReference>
<dbReference type="PANTHER" id="PTHR15909">
    <property type="entry name" value="39S RIBOSOMAL PROTEIN L35, MITOCHONDRIAL"/>
    <property type="match status" value="1"/>
</dbReference>
<dbReference type="PANTHER" id="PTHR15909:SF0">
    <property type="entry name" value="LARGE RIBOSOMAL SUBUNIT PROTEIN BL35M"/>
    <property type="match status" value="1"/>
</dbReference>
<dbReference type="Pfam" id="PF01632">
    <property type="entry name" value="Ribosomal_L35p"/>
    <property type="match status" value="1"/>
</dbReference>
<dbReference type="SUPFAM" id="SSF143034">
    <property type="entry name" value="L35p-like"/>
    <property type="match status" value="1"/>
</dbReference>
<protein>
    <recommendedName>
        <fullName evidence="9">Large ribosomal subunit protein bL35m</fullName>
    </recommendedName>
    <alternativeName>
        <fullName>39S ribosomal protein L35, mitochondrial</fullName>
        <shortName>L35mt</shortName>
        <shortName>MRP-L35</shortName>
    </alternativeName>
</protein>
<comment type="subunit">
    <text evidence="3 4 5 6">Component of the mitochondrial large ribosomal subunit (mt-LSU) (PubMed:25278503, PubMed:25838379, PubMed:28892042, PubMed:35177605). Mature mammalian 55S mitochondrial ribosomes consist of a small (28S) and a large (39S) subunit. The 28S small subunit contains a 12S ribosomal RNA (12S mt-rRNA) and 30 different proteins. The 39S large subunit contains a 16S rRNA (16S mt-rRNA), a copy of mitochondrial valine transfer RNA (mt-tRNA(Val)), which plays an integral structural role, and 52 different proteins.</text>
</comment>
<comment type="interaction">
    <interactant intactId="EBI-17590278">
        <id>Q9NZE8-2</id>
    </interactant>
    <interactant intactId="EBI-17589229">
        <id>Q6NTF9-3</id>
        <label>RHBDD2</label>
    </interactant>
    <organismsDiffer>false</organismsDiffer>
    <experiments>3</experiments>
</comment>
<comment type="subcellular location">
    <subcellularLocation>
        <location evidence="3 4 5">Mitochondrion</location>
    </subcellularLocation>
</comment>
<comment type="alternative products">
    <event type="alternative splicing"/>
    <isoform>
        <id>Q9NZE8-1</id>
        <name>1</name>
        <sequence type="displayed"/>
    </isoform>
    <isoform>
        <id>Q9NZE8-2</id>
        <name>2</name>
        <sequence type="described" ref="VSP_036507"/>
    </isoform>
</comment>
<comment type="similarity">
    <text evidence="10">Belongs to the bacterial ribosomal protein bL35 family.</text>
</comment>
<comment type="sequence caution" evidence="10">
    <conflict type="frameshift">
        <sequence resource="EMBL-CDS" id="AAF64263"/>
    </conflict>
</comment>
<proteinExistence type="evidence at protein level"/>
<sequence>MAASAFAGAVRAASGILRPLNILASSTYRNCVKNASLISALSTGRFSHIQTPVVSSTPRLTTSERNLTCGHTSVILNRMAPVLPSVLKLPVRSLTYFSARKGKRKTVKAVIDRFLRLHCGLWVRRKAGYKKKLWKKTPARKKRLREFVFCNKTQSKLLDKMTTSFWKRRNWYVDDPYQKYHDRTNLKV</sequence>